<gene>
    <name evidence="1" type="primary">bchB</name>
    <name type="ordered locus">BRADO1640</name>
</gene>
<dbReference type="EC" id="1.3.7.7" evidence="1"/>
<dbReference type="EMBL" id="CU234118">
    <property type="protein sequence ID" value="CAL75518.1"/>
    <property type="molecule type" value="Genomic_DNA"/>
</dbReference>
<dbReference type="RefSeq" id="WP_011924747.1">
    <property type="nucleotide sequence ID" value="NC_009445.1"/>
</dbReference>
<dbReference type="SMR" id="A4YNP2"/>
<dbReference type="STRING" id="114615.BRADO1640"/>
<dbReference type="KEGG" id="bra:BRADO1640"/>
<dbReference type="eggNOG" id="COG2710">
    <property type="taxonomic scope" value="Bacteria"/>
</dbReference>
<dbReference type="HOGENOM" id="CLU_025470_0_0_5"/>
<dbReference type="OrthoDB" id="5717231at2"/>
<dbReference type="UniPathway" id="UPA00671"/>
<dbReference type="Proteomes" id="UP000001994">
    <property type="component" value="Chromosome"/>
</dbReference>
<dbReference type="GO" id="GO:0051539">
    <property type="term" value="F:4 iron, 4 sulfur cluster binding"/>
    <property type="evidence" value="ECO:0007669"/>
    <property type="project" value="UniProtKB-UniRule"/>
</dbReference>
<dbReference type="GO" id="GO:0005524">
    <property type="term" value="F:ATP binding"/>
    <property type="evidence" value="ECO:0007669"/>
    <property type="project" value="UniProtKB-UniRule"/>
</dbReference>
<dbReference type="GO" id="GO:0046872">
    <property type="term" value="F:metal ion binding"/>
    <property type="evidence" value="ECO:0007669"/>
    <property type="project" value="UniProtKB-KW"/>
</dbReference>
<dbReference type="GO" id="GO:0016730">
    <property type="term" value="F:oxidoreductase activity, acting on iron-sulfur proteins as donors"/>
    <property type="evidence" value="ECO:0007669"/>
    <property type="project" value="InterPro"/>
</dbReference>
<dbReference type="GO" id="GO:0016636">
    <property type="term" value="F:oxidoreductase activity, acting on the CH-CH group of donors, iron-sulfur protein as acceptor"/>
    <property type="evidence" value="ECO:0007669"/>
    <property type="project" value="UniProtKB-UniRule"/>
</dbReference>
<dbReference type="GO" id="GO:0036070">
    <property type="term" value="P:light-independent bacteriochlorophyll biosynthetic process"/>
    <property type="evidence" value="ECO:0007669"/>
    <property type="project" value="UniProtKB-UniRule"/>
</dbReference>
<dbReference type="GO" id="GO:0019685">
    <property type="term" value="P:photosynthesis, dark reaction"/>
    <property type="evidence" value="ECO:0007669"/>
    <property type="project" value="InterPro"/>
</dbReference>
<dbReference type="Gene3D" id="1.20.89.20">
    <property type="match status" value="1"/>
</dbReference>
<dbReference type="Gene3D" id="3.40.50.1980">
    <property type="entry name" value="Nitrogenase molybdenum iron protein domain"/>
    <property type="match status" value="3"/>
</dbReference>
<dbReference type="Gene3D" id="1.10.8.550">
    <property type="entry name" value="Proto-chlorophyllide reductase 57 kD subunit B"/>
    <property type="match status" value="1"/>
</dbReference>
<dbReference type="HAMAP" id="MF_00353">
    <property type="entry name" value="ChlB_BchB"/>
    <property type="match status" value="1"/>
</dbReference>
<dbReference type="InterPro" id="IPR050152">
    <property type="entry name" value="ChlB/BchB/BchZ"/>
</dbReference>
<dbReference type="InterPro" id="IPR013580">
    <property type="entry name" value="LI-POR_suB-like_C"/>
</dbReference>
<dbReference type="InterPro" id="IPR000510">
    <property type="entry name" value="Nase/OxRdtase_comp1"/>
</dbReference>
<dbReference type="InterPro" id="IPR042298">
    <property type="entry name" value="P-CP_red_C"/>
</dbReference>
<dbReference type="InterPro" id="IPR005969">
    <property type="entry name" value="Protochl_reductB"/>
</dbReference>
<dbReference type="InterPro" id="IPR016209">
    <property type="entry name" value="Protochlorophyllide_Rdtase"/>
</dbReference>
<dbReference type="NCBIfam" id="TIGR01278">
    <property type="entry name" value="DPOR_BchB"/>
    <property type="match status" value="1"/>
</dbReference>
<dbReference type="PANTHER" id="PTHR33712">
    <property type="entry name" value="LIGHT-INDEPENDENT PROTOCHLOROPHYLLIDE REDUCTASE SUBUNIT B"/>
    <property type="match status" value="1"/>
</dbReference>
<dbReference type="PANTHER" id="PTHR33712:SF7">
    <property type="entry name" value="LIGHT-INDEPENDENT PROTOCHLOROPHYLLIDE REDUCTASE SUBUNIT B"/>
    <property type="match status" value="1"/>
</dbReference>
<dbReference type="Pfam" id="PF00148">
    <property type="entry name" value="Oxidored_nitro"/>
    <property type="match status" value="1"/>
</dbReference>
<dbReference type="Pfam" id="PF08369">
    <property type="entry name" value="PCP_red"/>
    <property type="match status" value="1"/>
</dbReference>
<dbReference type="PIRSF" id="PIRSF000163">
    <property type="entry name" value="PCP_ChlB"/>
    <property type="match status" value="1"/>
</dbReference>
<dbReference type="SUPFAM" id="SSF53807">
    <property type="entry name" value="Helical backbone' metal receptor"/>
    <property type="match status" value="1"/>
</dbReference>
<feature type="chain" id="PRO_0000324041" description="Light-independent protochlorophyllide reductase subunit B">
    <location>
        <begin position="1"/>
        <end position="518"/>
    </location>
</feature>
<feature type="active site" description="Proton donor" evidence="1">
    <location>
        <position position="285"/>
    </location>
</feature>
<feature type="binding site" evidence="1">
    <location>
        <position position="36"/>
    </location>
    <ligand>
        <name>[4Fe-4S] cluster</name>
        <dbReference type="ChEBI" id="CHEBI:49883"/>
        <note>ligand shared with heterodimeric partner</note>
    </ligand>
</feature>
<feature type="binding site" evidence="1">
    <location>
        <begin position="420"/>
        <end position="421"/>
    </location>
    <ligand>
        <name>substrate</name>
    </ligand>
</feature>
<keyword id="KW-0004">4Fe-4S</keyword>
<keyword id="KW-0067">ATP-binding</keyword>
<keyword id="KW-0077">Bacteriochlorophyll biosynthesis</keyword>
<keyword id="KW-0149">Chlorophyll biosynthesis</keyword>
<keyword id="KW-0408">Iron</keyword>
<keyword id="KW-0411">Iron-sulfur</keyword>
<keyword id="KW-0479">Metal-binding</keyword>
<keyword id="KW-0547">Nucleotide-binding</keyword>
<keyword id="KW-0560">Oxidoreductase</keyword>
<keyword id="KW-0602">Photosynthesis</keyword>
<keyword id="KW-1185">Reference proteome</keyword>
<evidence type="ECO:0000255" key="1">
    <source>
        <dbReference type="HAMAP-Rule" id="MF_00353"/>
    </source>
</evidence>
<sequence length="518" mass="57496">MQLSVWTYEGPPHIGAMRIATAMRDVHYVLHAPQGDTYADLLFTMIERRDRRPPVTYTTFQARDLGGDTADLLQSAARAAYERFQPQAMLVGASCTAELIQDDPGGLAQALRLPIPVIPLELPAYQRKENWGASETFYRIVRALAASSADGSPRHERKAGARPVCNLLGPTALGFRHRDDLAEVTRQVVELGIEINVVAPWNATPADLARLPQADFNIVLYPEIALTAAQWLNRQFGQPYTKTIPIGVGATRDFIREVAGLAGVDAEPVLSRAESRLPWYSRSVDSTYLTGKRVFIFGDATHAVAAARVATQELGFEVVGLGTYAREFAREIREAAALYGIEPLITDDYLQVEARVSELRPELVLGTQMERHIAKRLGIPCAVISSPTHVQDFPARYSPQMGFEGANVLFDTWVHPLMMGLEEHLLGMFREDHEFADHAPSHLGAAPAAPPQQPQLRVVETVTSTELAWASDAERELTKIPFFVRGKARRNTERFARERNVNLITLETLYDAKAHFGR</sequence>
<comment type="function">
    <text evidence="1">Component of the dark-operative protochlorophyllide reductase (DPOR) that uses Mg-ATP and reduced ferredoxin to reduce ring D of protochlorophyllide (Pchlide) to form chlorophyllide a (Chlide). This reaction is light-independent. The NB-protein (BchN-BchB) is the catalytic component of the complex.</text>
</comment>
<comment type="catalytic activity">
    <reaction evidence="1">
        <text>chlorophyllide a + oxidized 2[4Fe-4S]-[ferredoxin] + 2 ADP + 2 phosphate = protochlorophyllide a + reduced 2[4Fe-4S]-[ferredoxin] + 2 ATP + 2 H2O</text>
        <dbReference type="Rhea" id="RHEA:28202"/>
        <dbReference type="Rhea" id="RHEA-COMP:10002"/>
        <dbReference type="Rhea" id="RHEA-COMP:10004"/>
        <dbReference type="ChEBI" id="CHEBI:15377"/>
        <dbReference type="ChEBI" id="CHEBI:30616"/>
        <dbReference type="ChEBI" id="CHEBI:33722"/>
        <dbReference type="ChEBI" id="CHEBI:33723"/>
        <dbReference type="ChEBI" id="CHEBI:43474"/>
        <dbReference type="ChEBI" id="CHEBI:83348"/>
        <dbReference type="ChEBI" id="CHEBI:83350"/>
        <dbReference type="ChEBI" id="CHEBI:456216"/>
        <dbReference type="EC" id="1.3.7.7"/>
    </reaction>
</comment>
<comment type="cofactor">
    <cofactor evidence="1">
        <name>[4Fe-4S] cluster</name>
        <dbReference type="ChEBI" id="CHEBI:49883"/>
    </cofactor>
    <text evidence="1">Binds 1 [4Fe-4S] cluster per heterodimer. The cluster is bound at the heterodimer interface by residues from both subunits.</text>
</comment>
<comment type="pathway">
    <text evidence="1">Porphyrin-containing compound metabolism; bacteriochlorophyll biosynthesis (light-independent).</text>
</comment>
<comment type="subunit">
    <text evidence="1">Protochlorophyllide reductase is composed of three subunits; BchL, BchN and BchB. Forms a heterotetramer of two BchB and two BchN subunits.</text>
</comment>
<comment type="similarity">
    <text evidence="1">Belongs to the ChlB/BchB/BchZ family.</text>
</comment>
<protein>
    <recommendedName>
        <fullName evidence="1">Light-independent protochlorophyllide reductase subunit B</fullName>
        <shortName evidence="1">DPOR subunit B</shortName>
        <shortName evidence="1">LI-POR subunit B</shortName>
        <ecNumber evidence="1">1.3.7.7</ecNumber>
    </recommendedName>
</protein>
<name>BCHB_BRASO</name>
<organism>
    <name type="scientific">Bradyrhizobium sp. (strain ORS 278)</name>
    <dbReference type="NCBI Taxonomy" id="114615"/>
    <lineage>
        <taxon>Bacteria</taxon>
        <taxon>Pseudomonadati</taxon>
        <taxon>Pseudomonadota</taxon>
        <taxon>Alphaproteobacteria</taxon>
        <taxon>Hyphomicrobiales</taxon>
        <taxon>Nitrobacteraceae</taxon>
        <taxon>Bradyrhizobium</taxon>
    </lineage>
</organism>
<reference key="1">
    <citation type="journal article" date="2007" name="Science">
        <title>Legumes symbioses: absence of nod genes in photosynthetic bradyrhizobia.</title>
        <authorList>
            <person name="Giraud E."/>
            <person name="Moulin L."/>
            <person name="Vallenet D."/>
            <person name="Barbe V."/>
            <person name="Cytryn E."/>
            <person name="Avarre J.-C."/>
            <person name="Jaubert M."/>
            <person name="Simon D."/>
            <person name="Cartieaux F."/>
            <person name="Prin Y."/>
            <person name="Bena G."/>
            <person name="Hannibal L."/>
            <person name="Fardoux J."/>
            <person name="Kojadinovic M."/>
            <person name="Vuillet L."/>
            <person name="Lajus A."/>
            <person name="Cruveiller S."/>
            <person name="Rouy Z."/>
            <person name="Mangenot S."/>
            <person name="Segurens B."/>
            <person name="Dossat C."/>
            <person name="Franck W.L."/>
            <person name="Chang W.-S."/>
            <person name="Saunders E."/>
            <person name="Bruce D."/>
            <person name="Richardson P."/>
            <person name="Normand P."/>
            <person name="Dreyfus B."/>
            <person name="Pignol D."/>
            <person name="Stacey G."/>
            <person name="Emerich D."/>
            <person name="Vermeglio A."/>
            <person name="Medigue C."/>
            <person name="Sadowsky M."/>
        </authorList>
    </citation>
    <scope>NUCLEOTIDE SEQUENCE [LARGE SCALE GENOMIC DNA]</scope>
    <source>
        <strain>ORS 278</strain>
    </source>
</reference>
<proteinExistence type="inferred from homology"/>
<accession>A4YNP2</accession>